<protein>
    <recommendedName>
        <fullName>Integrin beta-1-binding protein 1</fullName>
    </recommendedName>
</protein>
<keyword id="KW-0037">Angiogenesis</keyword>
<keyword id="KW-0091">Biomineralization</keyword>
<keyword id="KW-0130">Cell adhesion</keyword>
<keyword id="KW-1003">Cell membrane</keyword>
<keyword id="KW-0966">Cell projection</keyword>
<keyword id="KW-0963">Cytoplasm</keyword>
<keyword id="KW-0206">Cytoskeleton</keyword>
<keyword id="KW-0221">Differentiation</keyword>
<keyword id="KW-0472">Membrane</keyword>
<keyword id="KW-0497">Mitogen</keyword>
<keyword id="KW-0914">Notch signaling pathway</keyword>
<keyword id="KW-0539">Nucleus</keyword>
<keyword id="KW-0597">Phosphoprotein</keyword>
<keyword id="KW-1185">Reference proteome</keyword>
<keyword id="KW-0804">Transcription</keyword>
<keyword id="KW-0805">Transcription regulation</keyword>
<feature type="chain" id="PRO_0000084263" description="Integrin beta-1-binding protein 1">
    <location>
        <begin position="1"/>
        <end position="200"/>
    </location>
</feature>
<feature type="domain" description="PID">
    <location>
        <begin position="58"/>
        <end position="200"/>
    </location>
</feature>
<feature type="region of interest" description="Disordered" evidence="4">
    <location>
        <begin position="1"/>
        <end position="56"/>
    </location>
</feature>
<feature type="region of interest" description="Interaction with KRIT1" evidence="1">
    <location>
        <begin position="136"/>
        <end position="139"/>
    </location>
</feature>
<feature type="region of interest" description="Interaction with ITGB1" evidence="1">
    <location>
        <begin position="139"/>
        <end position="141"/>
    </location>
</feature>
<feature type="short sequence motif" description="Nuclear localization signal" evidence="1">
    <location>
        <begin position="6"/>
        <end position="7"/>
    </location>
</feature>
<feature type="compositionally biased region" description="Basic residues" evidence="4">
    <location>
        <begin position="1"/>
        <end position="10"/>
    </location>
</feature>
<feature type="compositionally biased region" description="Low complexity" evidence="4">
    <location>
        <begin position="11"/>
        <end position="29"/>
    </location>
</feature>
<feature type="compositionally biased region" description="Polar residues" evidence="4">
    <location>
        <begin position="34"/>
        <end position="56"/>
    </location>
</feature>
<feature type="modified residue" description="Phosphothreonine; by CaMK2" evidence="2">
    <location>
        <position position="38"/>
    </location>
</feature>
<feature type="modified residue" description="Phosphoserine" evidence="3">
    <location>
        <position position="41"/>
    </location>
</feature>
<proteinExistence type="evidence at transcript level"/>
<name>ITBP1_BOVIN</name>
<gene>
    <name type="primary">ITGB1BP1</name>
</gene>
<sequence>MFRKGKKRHSSSSSQSSEISTKSKSVDSSLGGLSRSSTVASLDTDSTKSSGQSNNNSDTCAEFRIKYVGAIEKLKLSEGKSLEGPLDLINYIDVAQQDGKLPFVPLEEEFIMGVSKYGIKVSTSDQYDVLHRHALYLIIRMVCYDDGLGSGKSLLALKTTDANNQEYSLWVYQCNSLEQAQAICKVLSTAFDSVLTSEKP</sequence>
<reference key="1">
    <citation type="submission" date="2005-08" db="EMBL/GenBank/DDBJ databases">
        <authorList>
            <consortium name="NIH - Mammalian Gene Collection (MGC) project"/>
        </authorList>
    </citation>
    <scope>NUCLEOTIDE SEQUENCE [LARGE SCALE MRNA]</scope>
    <source>
        <strain>Hereford</strain>
        <tissue>Kidney</tissue>
    </source>
</reference>
<comment type="function">
    <text evidence="1">Key regulator of the integrin-mediated cell-matrix interaction signaling by binding to the ITGB1 cytoplasmic tail and preventing the activation of integrin alpha-5/beta-1 (heterodimer of ITGA5 and ITGB1) by talin or FERMT1. Plays a role in cell proliferation, differentiation, spreading, adhesion and migration in the context of mineralization and bone development and angiogenesis. Stimulates cellular proliferation in a fibronectin-dependent manner. Involved in the regulation of beta-1 integrin-containing focal adhesion (FA) site dynamics by controlling its assembly rate during cell adhesion; inhibits beta-1 integrin clustering within FA by directly competing with talin TLN1, and hence stimulates osteoblast spreading and migration in a fibronectin- and/or collagen-dependent manner. Acts as a guanine nucleotide dissociation inhibitor (GDI) by regulating Rho family GTPases during integrin-mediated cell matrix adhesion; reduces the level of active GTP-bound form of both CDC42 and RAC1 GTPases upon cell adhesion to fibronectin. Stimulates the release of active CDC42 from the membranes to maintain it in an inactive cytoplasmic pool. Participates in the translocation of the Rho-associated protein kinase ROCK1 to membrane ruffles at cell leading edges of the cell membrane, leading to an increase of myoblast cell migration on laminin. Plays a role in bone mineralization at a late stage of osteoblast differentiation; modulates the dynamic formation of focal adhesions into fibrillar adhesions, which are adhesive structures responsible for fibronectin deposition and fibrillogenesis. Plays a role in blood vessel development; acts as a negative regulator of angiogenesis by attenuating endothelial cell proliferation and migration, lumen formation and sprouting angiogenesis by promoting AKT phosphorylation and inhibiting ERK1/2 phosphorylation through activation of the Notch signaling pathway. Promotes transcriptional activity of the MYC promoter (By similarity).</text>
</comment>
<comment type="subunit">
    <text evidence="1">Interacts (via N-terminus and PTB domain) with ROCK1. Found in a complex, at least composed of ITGB1BP1, KRIT1 and RAP1A. Interacts (via C-terminal region) with ITGB1 (via C-terminal cytoplasmic tail); the interaction prevents talin TLN1 binding to ITGB1 and KRIT1 and ITGB1 compete for the same binding site. Interacts with KRIT1 (via N-terminal NPXY motif); the interaction induces the opening conformation of KRIT1 and KRIT1 and ITGB1 compete for the same binding site. Isoform 2 does not interact with ITGB1. Interacts with CDC42 (GTP- or GDP-bound form); the interaction is increased with the CDC42-membrane bound forms and prevents both CDC42 activation and cell spreading. Interacts (via C-terminal domain region) with NME2. Interacts with FERMT2 and RAC1 (By similarity).</text>
</comment>
<comment type="subcellular location">
    <subcellularLocation>
        <location evidence="1">Nucleus</location>
    </subcellularLocation>
    <subcellularLocation>
        <location evidence="1">Cytoplasm</location>
    </subcellularLocation>
    <subcellularLocation>
        <location evidence="1">Cytoplasm</location>
        <location evidence="1">Cytoskeleton</location>
    </subcellularLocation>
    <subcellularLocation>
        <location evidence="1">Cell membrane</location>
    </subcellularLocation>
    <subcellularLocation>
        <location evidence="1">Cell projection</location>
        <location evidence="1">Lamellipodium</location>
    </subcellularLocation>
    <subcellularLocation>
        <location evidence="1">Cell projection</location>
        <location evidence="1">Ruffle</location>
    </subcellularLocation>
    <text evidence="1">Nucleocytoplasmic shuttling protein; shuttles between nucleus and cytoplasm in an integrin-dependent manner; probably sequestered in the cytosol by ITGB1. Its localization is dependent on the stage of cell spreading on fibronectin; cytoplasmic in case of round cells, corresponding to the initial step of cell spreading, or nuclear in case of well spread cells. Colocalizes with ROCK1 and NME2 at beta-1 integrin engagement sites. Together with ITGB1 and NME2 is recruited to beta-1 integrin-rich peripheral ruffles and lamellipodia during initial cell spreading on fibronectin and/or collagen (By similarity).</text>
</comment>
<comment type="PTM">
    <text evidence="1">Phosphorylation at Thr-38 seems to enhance integrin alpha5beta1-mediated cell adhesion. The degree of phosphorylation is regulated by integrin-dependent cell-matrix interaction (By similarity).</text>
</comment>
<organism>
    <name type="scientific">Bos taurus</name>
    <name type="common">Bovine</name>
    <dbReference type="NCBI Taxonomy" id="9913"/>
    <lineage>
        <taxon>Eukaryota</taxon>
        <taxon>Metazoa</taxon>
        <taxon>Chordata</taxon>
        <taxon>Craniata</taxon>
        <taxon>Vertebrata</taxon>
        <taxon>Euteleostomi</taxon>
        <taxon>Mammalia</taxon>
        <taxon>Eutheria</taxon>
        <taxon>Laurasiatheria</taxon>
        <taxon>Artiodactyla</taxon>
        <taxon>Ruminantia</taxon>
        <taxon>Pecora</taxon>
        <taxon>Bovidae</taxon>
        <taxon>Bovinae</taxon>
        <taxon>Bos</taxon>
    </lineage>
</organism>
<evidence type="ECO:0000250" key="1"/>
<evidence type="ECO:0000250" key="2">
    <source>
        <dbReference type="UniProtKB" id="O14713"/>
    </source>
</evidence>
<evidence type="ECO:0000250" key="3">
    <source>
        <dbReference type="UniProtKB" id="O35671"/>
    </source>
</evidence>
<evidence type="ECO:0000256" key="4">
    <source>
        <dbReference type="SAM" id="MobiDB-lite"/>
    </source>
</evidence>
<dbReference type="EMBL" id="BC103215">
    <property type="protein sequence ID" value="AAI03216.1"/>
    <property type="molecule type" value="mRNA"/>
</dbReference>
<dbReference type="RefSeq" id="NP_001029620.1">
    <property type="nucleotide sequence ID" value="NM_001034448.2"/>
</dbReference>
<dbReference type="RefSeq" id="XP_005213023.1">
    <property type="nucleotide sequence ID" value="XM_005212966.5"/>
</dbReference>
<dbReference type="RefSeq" id="XP_005213024.1">
    <property type="nucleotide sequence ID" value="XM_005212967.5"/>
</dbReference>
<dbReference type="RefSeq" id="XP_005213025.1">
    <property type="nucleotide sequence ID" value="XM_005212968.4"/>
</dbReference>
<dbReference type="RefSeq" id="XP_059747167.1">
    <property type="nucleotide sequence ID" value="XM_059891184.1"/>
</dbReference>
<dbReference type="SMR" id="Q3ZBM4"/>
<dbReference type="FunCoup" id="Q3ZBM4">
    <property type="interactions" value="3180"/>
</dbReference>
<dbReference type="STRING" id="9913.ENSBTAP00000017362"/>
<dbReference type="PaxDb" id="9913-ENSBTAP00000017362"/>
<dbReference type="Ensembl" id="ENSBTAT00000017362.7">
    <property type="protein sequence ID" value="ENSBTAP00000017362.5"/>
    <property type="gene ID" value="ENSBTAG00000013063.7"/>
</dbReference>
<dbReference type="GeneID" id="513531"/>
<dbReference type="KEGG" id="bta:513531"/>
<dbReference type="CTD" id="9270"/>
<dbReference type="VEuPathDB" id="HostDB:ENSBTAG00000013063"/>
<dbReference type="VGNC" id="VGNC:30325">
    <property type="gene designation" value="ITGB1BP1"/>
</dbReference>
<dbReference type="eggNOG" id="ENOG502QS6V">
    <property type="taxonomic scope" value="Eukaryota"/>
</dbReference>
<dbReference type="GeneTree" id="ENSGT00390000003990"/>
<dbReference type="HOGENOM" id="CLU_117247_0_0_1"/>
<dbReference type="InParanoid" id="Q3ZBM4"/>
<dbReference type="OMA" id="QCSIWVY"/>
<dbReference type="OrthoDB" id="10060702at2759"/>
<dbReference type="TreeFam" id="TF105393"/>
<dbReference type="Proteomes" id="UP000009136">
    <property type="component" value="Chromosome 11"/>
</dbReference>
<dbReference type="Bgee" id="ENSBTAG00000013063">
    <property type="expression patterns" value="Expressed in oocyte and 106 other cell types or tissues"/>
</dbReference>
<dbReference type="GO" id="GO:0071944">
    <property type="term" value="C:cell periphery"/>
    <property type="evidence" value="ECO:0000250"/>
    <property type="project" value="UniProtKB"/>
</dbReference>
<dbReference type="GO" id="GO:0005737">
    <property type="term" value="C:cytoplasm"/>
    <property type="evidence" value="ECO:0000250"/>
    <property type="project" value="UniProtKB"/>
</dbReference>
<dbReference type="GO" id="GO:0005856">
    <property type="term" value="C:cytoskeleton"/>
    <property type="evidence" value="ECO:0000250"/>
    <property type="project" value="UniProtKB"/>
</dbReference>
<dbReference type="GO" id="GO:0005829">
    <property type="term" value="C:cytosol"/>
    <property type="evidence" value="ECO:0000250"/>
    <property type="project" value="UniProtKB"/>
</dbReference>
<dbReference type="GO" id="GO:0030027">
    <property type="term" value="C:lamellipodium"/>
    <property type="evidence" value="ECO:0000250"/>
    <property type="project" value="UniProtKB"/>
</dbReference>
<dbReference type="GO" id="GO:0005634">
    <property type="term" value="C:nucleus"/>
    <property type="evidence" value="ECO:0000250"/>
    <property type="project" value="UniProtKB"/>
</dbReference>
<dbReference type="GO" id="GO:0048471">
    <property type="term" value="C:perinuclear region of cytoplasm"/>
    <property type="evidence" value="ECO:0000250"/>
    <property type="project" value="UniProtKB"/>
</dbReference>
<dbReference type="GO" id="GO:0005886">
    <property type="term" value="C:plasma membrane"/>
    <property type="evidence" value="ECO:0000250"/>
    <property type="project" value="UniProtKB"/>
</dbReference>
<dbReference type="GO" id="GO:0001726">
    <property type="term" value="C:ruffle"/>
    <property type="evidence" value="ECO:0000250"/>
    <property type="project" value="UniProtKB"/>
</dbReference>
<dbReference type="GO" id="GO:0005092">
    <property type="term" value="F:GDP-dissociation inhibitor activity"/>
    <property type="evidence" value="ECO:0000250"/>
    <property type="project" value="UniProtKB"/>
</dbReference>
<dbReference type="GO" id="GO:0005178">
    <property type="term" value="F:integrin binding"/>
    <property type="evidence" value="ECO:0000318"/>
    <property type="project" value="GO_Central"/>
</dbReference>
<dbReference type="GO" id="GO:0032148">
    <property type="term" value="P:activation of protein kinase B activity"/>
    <property type="evidence" value="ECO:0000250"/>
    <property type="project" value="UniProtKB"/>
</dbReference>
<dbReference type="GO" id="GO:0031214">
    <property type="term" value="P:biomineral tissue development"/>
    <property type="evidence" value="ECO:0007669"/>
    <property type="project" value="UniProtKB-KW"/>
</dbReference>
<dbReference type="GO" id="GO:0097746">
    <property type="term" value="P:blood vessel diameter maintenance"/>
    <property type="evidence" value="ECO:0000250"/>
    <property type="project" value="UniProtKB"/>
</dbReference>
<dbReference type="GO" id="GO:0002043">
    <property type="term" value="P:blood vessel endothelial cell proliferation involved in sprouting angiogenesis"/>
    <property type="evidence" value="ECO:0000250"/>
    <property type="project" value="UniProtKB"/>
</dbReference>
<dbReference type="GO" id="GO:0007155">
    <property type="term" value="P:cell adhesion"/>
    <property type="evidence" value="ECO:0007669"/>
    <property type="project" value="UniProtKB-KW"/>
</dbReference>
<dbReference type="GO" id="GO:0030154">
    <property type="term" value="P:cell differentiation"/>
    <property type="evidence" value="ECO:0007669"/>
    <property type="project" value="UniProtKB-KW"/>
</dbReference>
<dbReference type="GO" id="GO:0044344">
    <property type="term" value="P:cellular response to fibroblast growth factor stimulus"/>
    <property type="evidence" value="ECO:0000250"/>
    <property type="project" value="UniProtKB"/>
</dbReference>
<dbReference type="GO" id="GO:0035924">
    <property type="term" value="P:cellular response to vascular endothelial growth factor stimulus"/>
    <property type="evidence" value="ECO:0000250"/>
    <property type="project" value="UniProtKB"/>
</dbReference>
<dbReference type="GO" id="GO:0033622">
    <property type="term" value="P:integrin activation"/>
    <property type="evidence" value="ECO:0000250"/>
    <property type="project" value="UniProtKB"/>
</dbReference>
<dbReference type="GO" id="GO:0007229">
    <property type="term" value="P:integrin-mediated signaling pathway"/>
    <property type="evidence" value="ECO:0000250"/>
    <property type="project" value="UniProtKB"/>
</dbReference>
<dbReference type="GO" id="GO:0051451">
    <property type="term" value="P:myoblast migration"/>
    <property type="evidence" value="ECO:0000250"/>
    <property type="project" value="UniProtKB"/>
</dbReference>
<dbReference type="GO" id="GO:0006933">
    <property type="term" value="P:negative regulation of cell adhesion involved in substrate-bound cell migration"/>
    <property type="evidence" value="ECO:0000250"/>
    <property type="project" value="UniProtKB"/>
</dbReference>
<dbReference type="GO" id="GO:0090051">
    <property type="term" value="P:negative regulation of cell migration involved in sprouting angiogenesis"/>
    <property type="evidence" value="ECO:0000250"/>
    <property type="project" value="UniProtKB"/>
</dbReference>
<dbReference type="GO" id="GO:0008285">
    <property type="term" value="P:negative regulation of cell population proliferation"/>
    <property type="evidence" value="ECO:0000250"/>
    <property type="project" value="UniProtKB"/>
</dbReference>
<dbReference type="GO" id="GO:0070373">
    <property type="term" value="P:negative regulation of ERK1 and ERK2 cascade"/>
    <property type="evidence" value="ECO:0000250"/>
    <property type="project" value="UniProtKB"/>
</dbReference>
<dbReference type="GO" id="GO:0010764">
    <property type="term" value="P:negative regulation of fibroblast migration"/>
    <property type="evidence" value="ECO:0000250"/>
    <property type="project" value="UniProtKB"/>
</dbReference>
<dbReference type="GO" id="GO:0051895">
    <property type="term" value="P:negative regulation of focal adhesion assembly"/>
    <property type="evidence" value="ECO:0000250"/>
    <property type="project" value="UniProtKB"/>
</dbReference>
<dbReference type="GO" id="GO:0032091">
    <property type="term" value="P:negative regulation of protein binding"/>
    <property type="evidence" value="ECO:0000250"/>
    <property type="project" value="UniProtKB"/>
</dbReference>
<dbReference type="GO" id="GO:0006469">
    <property type="term" value="P:negative regulation of protein kinase activity"/>
    <property type="evidence" value="ECO:0000250"/>
    <property type="project" value="UniProtKB"/>
</dbReference>
<dbReference type="GO" id="GO:0090315">
    <property type="term" value="P:negative regulation of protein targeting to membrane"/>
    <property type="evidence" value="ECO:0000250"/>
    <property type="project" value="UniProtKB"/>
</dbReference>
<dbReference type="GO" id="GO:1900025">
    <property type="term" value="P:negative regulation of substrate adhesion-dependent cell spreading"/>
    <property type="evidence" value="ECO:0000250"/>
    <property type="project" value="UniProtKB"/>
</dbReference>
<dbReference type="GO" id="GO:0007219">
    <property type="term" value="P:Notch signaling pathway"/>
    <property type="evidence" value="ECO:0007669"/>
    <property type="project" value="UniProtKB-KW"/>
</dbReference>
<dbReference type="GO" id="GO:0051781">
    <property type="term" value="P:positive regulation of cell division"/>
    <property type="evidence" value="ECO:0007669"/>
    <property type="project" value="UniProtKB-KW"/>
</dbReference>
<dbReference type="GO" id="GO:0008284">
    <property type="term" value="P:positive regulation of cell population proliferation"/>
    <property type="evidence" value="ECO:0000250"/>
    <property type="project" value="UniProtKB"/>
</dbReference>
<dbReference type="GO" id="GO:0010595">
    <property type="term" value="P:positive regulation of endothelial cell migration"/>
    <property type="evidence" value="ECO:0000250"/>
    <property type="project" value="UniProtKB"/>
</dbReference>
<dbReference type="GO" id="GO:0051894">
    <property type="term" value="P:positive regulation of focal adhesion assembly"/>
    <property type="evidence" value="ECO:0000250"/>
    <property type="project" value="UniProtKB"/>
</dbReference>
<dbReference type="GO" id="GO:0045747">
    <property type="term" value="P:positive regulation of Notch signaling pathway"/>
    <property type="evidence" value="ECO:0000250"/>
    <property type="project" value="UniProtKB"/>
</dbReference>
<dbReference type="GO" id="GO:0051897">
    <property type="term" value="P:positive regulation of phosphatidylinositol 3-kinase/protein kinase B signal transduction"/>
    <property type="evidence" value="ECO:0000250"/>
    <property type="project" value="UniProtKB"/>
</dbReference>
<dbReference type="GO" id="GO:0090314">
    <property type="term" value="P:positive regulation of protein targeting to membrane"/>
    <property type="evidence" value="ECO:0000250"/>
    <property type="project" value="UniProtKB"/>
</dbReference>
<dbReference type="GO" id="GO:0051496">
    <property type="term" value="P:positive regulation of stress fiber assembly"/>
    <property type="evidence" value="ECO:0000250"/>
    <property type="project" value="UniProtKB"/>
</dbReference>
<dbReference type="GO" id="GO:0045944">
    <property type="term" value="P:positive regulation of transcription by RNA polymerase II"/>
    <property type="evidence" value="ECO:0000250"/>
    <property type="project" value="UniProtKB"/>
</dbReference>
<dbReference type="GO" id="GO:0072659">
    <property type="term" value="P:protein localization to plasma membrane"/>
    <property type="evidence" value="ECO:0000250"/>
    <property type="project" value="UniProtKB"/>
</dbReference>
<dbReference type="GO" id="GO:0043113">
    <property type="term" value="P:receptor clustering"/>
    <property type="evidence" value="ECO:0000250"/>
    <property type="project" value="UniProtKB"/>
</dbReference>
<dbReference type="GO" id="GO:0033628">
    <property type="term" value="P:regulation of cell adhesion mediated by integrin"/>
    <property type="evidence" value="ECO:0000250"/>
    <property type="project" value="UniProtKB"/>
</dbReference>
<dbReference type="GO" id="GO:0043087">
    <property type="term" value="P:regulation of GTPase activity"/>
    <property type="evidence" value="ECO:0000250"/>
    <property type="project" value="UniProtKB"/>
</dbReference>
<dbReference type="GO" id="GO:2001044">
    <property type="term" value="P:regulation of integrin-mediated signaling pathway"/>
    <property type="evidence" value="ECO:0000250"/>
    <property type="project" value="UniProtKB"/>
</dbReference>
<dbReference type="GO" id="GO:0035148">
    <property type="term" value="P:tube formation"/>
    <property type="evidence" value="ECO:0000250"/>
    <property type="project" value="UniProtKB"/>
</dbReference>
<dbReference type="CDD" id="cd13163">
    <property type="entry name" value="PTB_ICAP1"/>
    <property type="match status" value="1"/>
</dbReference>
<dbReference type="FunFam" id="2.30.29.30:FF:000716">
    <property type="entry name" value="Integrin beta-1-binding protein 1"/>
    <property type="match status" value="1"/>
</dbReference>
<dbReference type="Gene3D" id="6.20.360.10">
    <property type="match status" value="1"/>
</dbReference>
<dbReference type="InterPro" id="IPR019517">
    <property type="entry name" value="Integrin-bd_ICAP-1"/>
</dbReference>
<dbReference type="InterPro" id="IPR006020">
    <property type="entry name" value="PTB/PI_dom"/>
</dbReference>
<dbReference type="PANTHER" id="PTHR32055">
    <property type="entry name" value="INTEGRIN BETA-1-BINDING PROTEIN 1"/>
    <property type="match status" value="1"/>
</dbReference>
<dbReference type="PANTHER" id="PTHR32055:SF1">
    <property type="entry name" value="INTEGRIN BETA-1-BINDING PROTEIN 1"/>
    <property type="match status" value="1"/>
</dbReference>
<dbReference type="Pfam" id="PF10480">
    <property type="entry name" value="ICAP-1_inte_bdg"/>
    <property type="match status" value="1"/>
</dbReference>
<dbReference type="SMART" id="SM00462">
    <property type="entry name" value="PTB"/>
    <property type="match status" value="1"/>
</dbReference>
<dbReference type="SUPFAM" id="SSF50729">
    <property type="entry name" value="PH domain-like"/>
    <property type="match status" value="1"/>
</dbReference>
<accession>Q3ZBM4</accession>